<proteinExistence type="evidence at protein level"/>
<gene>
    <name type="primary">Bbs2</name>
</gene>
<keyword id="KW-1003">Cell membrane</keyword>
<keyword id="KW-0966">Cell projection</keyword>
<keyword id="KW-0969">Cilium</keyword>
<keyword id="KW-0970">Cilium biogenesis/degradation</keyword>
<keyword id="KW-0175">Coiled coil</keyword>
<keyword id="KW-0963">Cytoplasm</keyword>
<keyword id="KW-0206">Cytoskeleton</keyword>
<keyword id="KW-0472">Membrane</keyword>
<keyword id="KW-0653">Protein transport</keyword>
<keyword id="KW-1185">Reference proteome</keyword>
<keyword id="KW-0813">Transport</keyword>
<comment type="function">
    <text evidence="1">The BBSome complex is thought to function as a coat complex required for sorting of specific membrane proteins to the primary cilia. The BBSome complex is required for ciliogenesis but is dispensable for centriolar satellite function. This ciliogenic function is mediated in part by the Rab8 GDP/GTP exchange factor, which localizes to the basal body and contacts the BBSome. Rab8(GTP) enters the primary cilium and promotes extension of the ciliary membrane. Firstly the BBSome associates with the ciliary membrane and binds to RAB3IP/Rabin8, the guanosyl exchange factor (GEF) for Rab8 and then the Rab8-GTP localizes to the cilium and promotes docking and fusion of carrier vesicles to the base of the ciliary membrane. The BBSome complex, together with the LTZL1, controls SMO ciliary trafficking and contributes to the sonic hedgehog (SHH) pathway regulation. Required for proper BBSome complex assembly and its ciliary localization (By similarity).</text>
</comment>
<comment type="subunit">
    <text evidence="2 5">Part of BBSome complex, that contains BBS1, BBS2, BBS4, BBS5, BBS7, BBS8/TTC8, BBS9 and BBIP10. Interacts (via C-terminus) with BBS7. Interacts (via coiled coil domain) with MKKS. Interacts with CCDC28B (By similarity). Interacts with DLEC1 (By similarity).</text>
</comment>
<comment type="subcellular location">
    <subcellularLocation>
        <location evidence="1">Cell projection</location>
        <location evidence="1">Cilium membrane</location>
    </subcellularLocation>
    <subcellularLocation>
        <location evidence="1">Cytoplasm</location>
    </subcellularLocation>
    <subcellularLocation>
        <location evidence="1">Cytoplasm</location>
        <location evidence="1">Cytoskeleton</location>
        <location evidence="1">Microtubule organizing center</location>
        <location evidence="1">Centrosome</location>
        <location evidence="1">Centriolar satellite</location>
    </subcellularLocation>
</comment>
<comment type="disruption phenotype">
    <text evidence="4">In mice obesity is associated with hyperleptinemia and resistance to the anorectic and weight-reducing effects of leptinan mice are resistant to the metabolic actions of leptin.</text>
</comment>
<dbReference type="EMBL" id="AF342737">
    <property type="protein sequence ID" value="AAK28553.1"/>
    <property type="molecule type" value="mRNA"/>
</dbReference>
<dbReference type="EMBL" id="AK010779">
    <property type="protein sequence ID" value="BAB27176.1"/>
    <property type="molecule type" value="mRNA"/>
</dbReference>
<dbReference type="EMBL" id="BC057184">
    <property type="protein sequence ID" value="AAH57184.1"/>
    <property type="molecule type" value="mRNA"/>
</dbReference>
<dbReference type="CCDS" id="CCDS40434.1"/>
<dbReference type="RefSeq" id="NP_080392.1">
    <property type="nucleotide sequence ID" value="NM_026116.3"/>
</dbReference>
<dbReference type="SMR" id="Q9CWF6"/>
<dbReference type="BioGRID" id="212145">
    <property type="interactions" value="4"/>
</dbReference>
<dbReference type="ComplexPortal" id="CPX-1909">
    <property type="entry name" value="BBSome complex"/>
</dbReference>
<dbReference type="DIP" id="DIP-60351N"/>
<dbReference type="FunCoup" id="Q9CWF6">
    <property type="interactions" value="596"/>
</dbReference>
<dbReference type="IntAct" id="Q9CWF6">
    <property type="interactions" value="12"/>
</dbReference>
<dbReference type="STRING" id="10090.ENSMUSP00000034206"/>
<dbReference type="GlyGen" id="Q9CWF6">
    <property type="glycosylation" value="3 sites, 2 N-linked glycans (2 sites)"/>
</dbReference>
<dbReference type="iPTMnet" id="Q9CWF6"/>
<dbReference type="PhosphoSitePlus" id="Q9CWF6"/>
<dbReference type="SwissPalm" id="Q9CWF6"/>
<dbReference type="PaxDb" id="10090-ENSMUSP00000034206"/>
<dbReference type="ProteomicsDB" id="273732"/>
<dbReference type="Pumba" id="Q9CWF6"/>
<dbReference type="Antibodypedia" id="28577">
    <property type="antibodies" value="119 antibodies from 23 providers"/>
</dbReference>
<dbReference type="DNASU" id="67378"/>
<dbReference type="Ensembl" id="ENSMUST00000034206.6">
    <property type="protein sequence ID" value="ENSMUSP00000034206.5"/>
    <property type="gene ID" value="ENSMUSG00000031755.7"/>
</dbReference>
<dbReference type="GeneID" id="67378"/>
<dbReference type="KEGG" id="mmu:67378"/>
<dbReference type="UCSC" id="uc009mvs.1">
    <property type="organism name" value="mouse"/>
</dbReference>
<dbReference type="AGR" id="MGI:2135267"/>
<dbReference type="CTD" id="583"/>
<dbReference type="MGI" id="MGI:2135267">
    <property type="gene designation" value="Bbs2"/>
</dbReference>
<dbReference type="VEuPathDB" id="HostDB:ENSMUSG00000031755"/>
<dbReference type="eggNOG" id="ENOG502QPWU">
    <property type="taxonomic scope" value="Eukaryota"/>
</dbReference>
<dbReference type="GeneTree" id="ENSGT00390000017113"/>
<dbReference type="HOGENOM" id="CLU_023359_0_0_1"/>
<dbReference type="InParanoid" id="Q9CWF6"/>
<dbReference type="OMA" id="MSDGANC"/>
<dbReference type="OrthoDB" id="2120021at2759"/>
<dbReference type="PhylomeDB" id="Q9CWF6"/>
<dbReference type="TreeFam" id="TF313236"/>
<dbReference type="Reactome" id="R-MMU-5620922">
    <property type="pathway name" value="BBSome-mediated cargo-targeting to cilium"/>
</dbReference>
<dbReference type="BioGRID-ORCS" id="67378">
    <property type="hits" value="2 hits in 76 CRISPR screens"/>
</dbReference>
<dbReference type="ChiTaRS" id="Bbs2">
    <property type="organism name" value="mouse"/>
</dbReference>
<dbReference type="PRO" id="PR:Q9CWF6"/>
<dbReference type="Proteomes" id="UP000000589">
    <property type="component" value="Chromosome 8"/>
</dbReference>
<dbReference type="RNAct" id="Q9CWF6">
    <property type="molecule type" value="protein"/>
</dbReference>
<dbReference type="Bgee" id="ENSMUSG00000031755">
    <property type="expression patterns" value="Expressed in retinal neural layer and 224 other cell types or tissues"/>
</dbReference>
<dbReference type="GO" id="GO:0034464">
    <property type="term" value="C:BBSome"/>
    <property type="evidence" value="ECO:0000314"/>
    <property type="project" value="UniProtKB"/>
</dbReference>
<dbReference type="GO" id="GO:0034451">
    <property type="term" value="C:centriolar satellite"/>
    <property type="evidence" value="ECO:0007669"/>
    <property type="project" value="UniProtKB-SubCell"/>
</dbReference>
<dbReference type="GO" id="GO:0036064">
    <property type="term" value="C:ciliary basal body"/>
    <property type="evidence" value="ECO:0000266"/>
    <property type="project" value="MGI"/>
</dbReference>
<dbReference type="GO" id="GO:0060170">
    <property type="term" value="C:ciliary membrane"/>
    <property type="evidence" value="ECO:0000266"/>
    <property type="project" value="ComplexPortal"/>
</dbReference>
<dbReference type="GO" id="GO:0005737">
    <property type="term" value="C:cytoplasm"/>
    <property type="evidence" value="ECO:0007669"/>
    <property type="project" value="UniProtKB-SubCell"/>
</dbReference>
<dbReference type="GO" id="GO:0016020">
    <property type="term" value="C:membrane"/>
    <property type="evidence" value="ECO:0000314"/>
    <property type="project" value="MGI"/>
</dbReference>
<dbReference type="GO" id="GO:0005902">
    <property type="term" value="C:microvillus"/>
    <property type="evidence" value="ECO:0000314"/>
    <property type="project" value="MGI"/>
</dbReference>
<dbReference type="GO" id="GO:0031514">
    <property type="term" value="C:motile cilium"/>
    <property type="evidence" value="ECO:0000315"/>
    <property type="project" value="BHF-UCL"/>
</dbReference>
<dbReference type="GO" id="GO:0043005">
    <property type="term" value="C:neuron projection"/>
    <property type="evidence" value="ECO:0000314"/>
    <property type="project" value="MGI"/>
</dbReference>
<dbReference type="GO" id="GO:0032420">
    <property type="term" value="C:stereocilium"/>
    <property type="evidence" value="ECO:0000314"/>
    <property type="project" value="MGI"/>
</dbReference>
<dbReference type="GO" id="GO:0061629">
    <property type="term" value="F:RNA polymerase II-specific DNA-binding transcription factor binding"/>
    <property type="evidence" value="ECO:0000266"/>
    <property type="project" value="MGI"/>
</dbReference>
<dbReference type="GO" id="GO:0030534">
    <property type="term" value="P:adult behavior"/>
    <property type="evidence" value="ECO:0000315"/>
    <property type="project" value="MGI"/>
</dbReference>
<dbReference type="GO" id="GO:0014824">
    <property type="term" value="P:artery smooth muscle contraction"/>
    <property type="evidence" value="ECO:0000315"/>
    <property type="project" value="MGI"/>
</dbReference>
<dbReference type="GO" id="GO:0048854">
    <property type="term" value="P:brain morphogenesis"/>
    <property type="evidence" value="ECO:0000315"/>
    <property type="project" value="MGI"/>
</dbReference>
<dbReference type="GO" id="GO:0051216">
    <property type="term" value="P:cartilage development"/>
    <property type="evidence" value="ECO:0000315"/>
    <property type="project" value="MGI"/>
</dbReference>
<dbReference type="GO" id="GO:0021987">
    <property type="term" value="P:cerebral cortex development"/>
    <property type="evidence" value="ECO:0000315"/>
    <property type="project" value="MGI"/>
</dbReference>
<dbReference type="GO" id="GO:0060271">
    <property type="term" value="P:cilium assembly"/>
    <property type="evidence" value="ECO:0000315"/>
    <property type="project" value="BHF-UCL"/>
</dbReference>
<dbReference type="GO" id="GO:0045444">
    <property type="term" value="P:fat cell differentiation"/>
    <property type="evidence" value="ECO:0000270"/>
    <property type="project" value="BHF-UCL"/>
</dbReference>
<dbReference type="GO" id="GO:0010467">
    <property type="term" value="P:gene expression"/>
    <property type="evidence" value="ECO:0000315"/>
    <property type="project" value="MGI"/>
</dbReference>
<dbReference type="GO" id="GO:0043001">
    <property type="term" value="P:Golgi to plasma membrane protein transport"/>
    <property type="evidence" value="ECO:0000266"/>
    <property type="project" value="MGI"/>
</dbReference>
<dbReference type="GO" id="GO:0021766">
    <property type="term" value="P:hippocampus development"/>
    <property type="evidence" value="ECO:0000315"/>
    <property type="project" value="MGI"/>
</dbReference>
<dbReference type="GO" id="GO:0033210">
    <property type="term" value="P:leptin-mediated signaling pathway"/>
    <property type="evidence" value="ECO:0000315"/>
    <property type="project" value="MGI"/>
</dbReference>
<dbReference type="GO" id="GO:0038108">
    <property type="term" value="P:negative regulation of appetite by leptin-mediated signaling pathway"/>
    <property type="evidence" value="ECO:0000315"/>
    <property type="project" value="BHF-UCL"/>
</dbReference>
<dbReference type="GO" id="GO:0010629">
    <property type="term" value="P:negative regulation of gene expression"/>
    <property type="evidence" value="ECO:0000315"/>
    <property type="project" value="MGI"/>
</dbReference>
<dbReference type="GO" id="GO:0040015">
    <property type="term" value="P:negative regulation of multicellular organism growth"/>
    <property type="evidence" value="ECO:0000315"/>
    <property type="project" value="MGI"/>
</dbReference>
<dbReference type="GO" id="GO:1905515">
    <property type="term" value="P:non-motile cilium assembly"/>
    <property type="evidence" value="ECO:0000315"/>
    <property type="project" value="MGI"/>
</dbReference>
<dbReference type="GO" id="GO:0045494">
    <property type="term" value="P:photoreceptor cell maintenance"/>
    <property type="evidence" value="ECO:0000315"/>
    <property type="project" value="MGI"/>
</dbReference>
<dbReference type="GO" id="GO:0040018">
    <property type="term" value="P:positive regulation of multicellular organism growth"/>
    <property type="evidence" value="ECO:0000315"/>
    <property type="project" value="MGI"/>
</dbReference>
<dbReference type="GO" id="GO:0008104">
    <property type="term" value="P:protein localization"/>
    <property type="evidence" value="ECO:0000315"/>
    <property type="project" value="MGI"/>
</dbReference>
<dbReference type="GO" id="GO:0033365">
    <property type="term" value="P:protein localization to organelle"/>
    <property type="evidence" value="ECO:0000314"/>
    <property type="project" value="BHF-UCL"/>
</dbReference>
<dbReference type="GO" id="GO:0060296">
    <property type="term" value="P:regulation of cilium beat frequency involved in ciliary motility"/>
    <property type="evidence" value="ECO:0000315"/>
    <property type="project" value="BHF-UCL"/>
</dbReference>
<dbReference type="GO" id="GO:0044321">
    <property type="term" value="P:response to leptin"/>
    <property type="evidence" value="ECO:0000315"/>
    <property type="project" value="MGI"/>
</dbReference>
<dbReference type="GO" id="GO:0007288">
    <property type="term" value="P:sperm axoneme assembly"/>
    <property type="evidence" value="ECO:0000315"/>
    <property type="project" value="MGI"/>
</dbReference>
<dbReference type="GO" id="GO:0021756">
    <property type="term" value="P:striatum development"/>
    <property type="evidence" value="ECO:0000315"/>
    <property type="project" value="MGI"/>
</dbReference>
<dbReference type="GO" id="GO:0042311">
    <property type="term" value="P:vasodilation"/>
    <property type="evidence" value="ECO:0000315"/>
    <property type="project" value="MGI"/>
</dbReference>
<dbReference type="GO" id="GO:0007601">
    <property type="term" value="P:visual perception"/>
    <property type="evidence" value="ECO:0000250"/>
    <property type="project" value="UniProtKB"/>
</dbReference>
<dbReference type="FunFam" id="2.130.10.10:FF:000967">
    <property type="entry name" value="Bardet-Biedl syndrome 2 protein homolog"/>
    <property type="match status" value="1"/>
</dbReference>
<dbReference type="InterPro" id="IPR016616">
    <property type="entry name" value="Bardet-Biedl_syndrome_2_prot"/>
</dbReference>
<dbReference type="InterPro" id="IPR055381">
    <property type="entry name" value="BBS2_CtH_dom"/>
</dbReference>
<dbReference type="InterPro" id="IPR029333">
    <property type="entry name" value="BBS2_GAE_dom"/>
</dbReference>
<dbReference type="InterPro" id="IPR055380">
    <property type="entry name" value="BBS2_hp_dom"/>
</dbReference>
<dbReference type="InterPro" id="IPR029429">
    <property type="entry name" value="BBS2_Mid"/>
</dbReference>
<dbReference type="InterPro" id="IPR029430">
    <property type="entry name" value="BBS2_N"/>
</dbReference>
<dbReference type="InterPro" id="IPR055379">
    <property type="entry name" value="BBS2_pf_dom"/>
</dbReference>
<dbReference type="InterPro" id="IPR036322">
    <property type="entry name" value="WD40_repeat_dom_sf"/>
</dbReference>
<dbReference type="PANTHER" id="PTHR32465">
    <property type="entry name" value="BARDET-BIEDL SYNDROME 2 PROTEIN"/>
    <property type="match status" value="1"/>
</dbReference>
<dbReference type="PANTHER" id="PTHR32465:SF0">
    <property type="entry name" value="BARDET-BIEDL SYNDROME 2 PROTEIN"/>
    <property type="match status" value="1"/>
</dbReference>
<dbReference type="Pfam" id="PF23351">
    <property type="entry name" value="BBS2_CtH"/>
    <property type="match status" value="1"/>
</dbReference>
<dbReference type="Pfam" id="PF14782">
    <property type="entry name" value="BBS2_GAE"/>
    <property type="match status" value="1"/>
</dbReference>
<dbReference type="Pfam" id="PF23353">
    <property type="entry name" value="BBS2_hp"/>
    <property type="match status" value="1"/>
</dbReference>
<dbReference type="Pfam" id="PF14783">
    <property type="entry name" value="BBS2_Mid"/>
    <property type="match status" value="1"/>
</dbReference>
<dbReference type="Pfam" id="PF14781">
    <property type="entry name" value="BBS2_N"/>
    <property type="match status" value="1"/>
</dbReference>
<dbReference type="Pfam" id="PF23350">
    <property type="entry name" value="BBS2_pf"/>
    <property type="match status" value="1"/>
</dbReference>
<dbReference type="PIRSF" id="PIRSF013684">
    <property type="entry name" value="BBS2"/>
    <property type="match status" value="1"/>
</dbReference>
<dbReference type="SUPFAM" id="SSF50978">
    <property type="entry name" value="WD40 repeat-like"/>
    <property type="match status" value="1"/>
</dbReference>
<feature type="chain" id="PRO_0000064844" description="BBSome complex member BBS2">
    <location>
        <begin position="1"/>
        <end position="721"/>
    </location>
</feature>
<feature type="coiled-coil region" evidence="3">
    <location>
        <begin position="325"/>
        <end position="369"/>
    </location>
</feature>
<organism>
    <name type="scientific">Mus musculus</name>
    <name type="common">Mouse</name>
    <dbReference type="NCBI Taxonomy" id="10090"/>
    <lineage>
        <taxon>Eukaryota</taxon>
        <taxon>Metazoa</taxon>
        <taxon>Chordata</taxon>
        <taxon>Craniata</taxon>
        <taxon>Vertebrata</taxon>
        <taxon>Euteleostomi</taxon>
        <taxon>Mammalia</taxon>
        <taxon>Eutheria</taxon>
        <taxon>Euarchontoglires</taxon>
        <taxon>Glires</taxon>
        <taxon>Rodentia</taxon>
        <taxon>Myomorpha</taxon>
        <taxon>Muroidea</taxon>
        <taxon>Muridae</taxon>
        <taxon>Murinae</taxon>
        <taxon>Mus</taxon>
        <taxon>Mus</taxon>
    </lineage>
</organism>
<reference key="1">
    <citation type="journal article" date="2001" name="Hum. Mol. Genet.">
        <title>Positional cloning of a novel gene on chromosome 16q causing Bardet-Biedl syndrome (BBS2).</title>
        <authorList>
            <person name="Nishimura D.Y."/>
            <person name="Searby C.C."/>
            <person name="Carmi R."/>
            <person name="Elbedour K."/>
            <person name="Van Maldergem L."/>
            <person name="Fulton A.B."/>
            <person name="Lam B.L."/>
            <person name="Powell B.R."/>
            <person name="Swiderski R.E."/>
            <person name="Bugge K.E."/>
            <person name="Haider N.B."/>
            <person name="Kwitek-Black A.E."/>
            <person name="Ying L."/>
            <person name="Duhl D.M."/>
            <person name="Gorman S.M."/>
            <person name="Heon E."/>
            <person name="Iannaccone A."/>
            <person name="Bonneau D."/>
            <person name="Biesecker L.G."/>
            <person name="Jacobson S.G."/>
            <person name="Stone E.M."/>
            <person name="Sheffield V.C."/>
        </authorList>
    </citation>
    <scope>NUCLEOTIDE SEQUENCE [MRNA]</scope>
    <source>
        <strain>Swiss Webster / NIH</strain>
        <tissue>Fetus</tissue>
    </source>
</reference>
<reference key="2">
    <citation type="journal article" date="2005" name="Science">
        <title>The transcriptional landscape of the mammalian genome.</title>
        <authorList>
            <person name="Carninci P."/>
            <person name="Kasukawa T."/>
            <person name="Katayama S."/>
            <person name="Gough J."/>
            <person name="Frith M.C."/>
            <person name="Maeda N."/>
            <person name="Oyama R."/>
            <person name="Ravasi T."/>
            <person name="Lenhard B."/>
            <person name="Wells C."/>
            <person name="Kodzius R."/>
            <person name="Shimokawa K."/>
            <person name="Bajic V.B."/>
            <person name="Brenner S.E."/>
            <person name="Batalov S."/>
            <person name="Forrest A.R."/>
            <person name="Zavolan M."/>
            <person name="Davis M.J."/>
            <person name="Wilming L.G."/>
            <person name="Aidinis V."/>
            <person name="Allen J.E."/>
            <person name="Ambesi-Impiombato A."/>
            <person name="Apweiler R."/>
            <person name="Aturaliya R.N."/>
            <person name="Bailey T.L."/>
            <person name="Bansal M."/>
            <person name="Baxter L."/>
            <person name="Beisel K.W."/>
            <person name="Bersano T."/>
            <person name="Bono H."/>
            <person name="Chalk A.M."/>
            <person name="Chiu K.P."/>
            <person name="Choudhary V."/>
            <person name="Christoffels A."/>
            <person name="Clutterbuck D.R."/>
            <person name="Crowe M.L."/>
            <person name="Dalla E."/>
            <person name="Dalrymple B.P."/>
            <person name="de Bono B."/>
            <person name="Della Gatta G."/>
            <person name="di Bernardo D."/>
            <person name="Down T."/>
            <person name="Engstrom P."/>
            <person name="Fagiolini M."/>
            <person name="Faulkner G."/>
            <person name="Fletcher C.F."/>
            <person name="Fukushima T."/>
            <person name="Furuno M."/>
            <person name="Futaki S."/>
            <person name="Gariboldi M."/>
            <person name="Georgii-Hemming P."/>
            <person name="Gingeras T.R."/>
            <person name="Gojobori T."/>
            <person name="Green R.E."/>
            <person name="Gustincich S."/>
            <person name="Harbers M."/>
            <person name="Hayashi Y."/>
            <person name="Hensch T.K."/>
            <person name="Hirokawa N."/>
            <person name="Hill D."/>
            <person name="Huminiecki L."/>
            <person name="Iacono M."/>
            <person name="Ikeo K."/>
            <person name="Iwama A."/>
            <person name="Ishikawa T."/>
            <person name="Jakt M."/>
            <person name="Kanapin A."/>
            <person name="Katoh M."/>
            <person name="Kawasawa Y."/>
            <person name="Kelso J."/>
            <person name="Kitamura H."/>
            <person name="Kitano H."/>
            <person name="Kollias G."/>
            <person name="Krishnan S.P."/>
            <person name="Kruger A."/>
            <person name="Kummerfeld S.K."/>
            <person name="Kurochkin I.V."/>
            <person name="Lareau L.F."/>
            <person name="Lazarevic D."/>
            <person name="Lipovich L."/>
            <person name="Liu J."/>
            <person name="Liuni S."/>
            <person name="McWilliam S."/>
            <person name="Madan Babu M."/>
            <person name="Madera M."/>
            <person name="Marchionni L."/>
            <person name="Matsuda H."/>
            <person name="Matsuzawa S."/>
            <person name="Miki H."/>
            <person name="Mignone F."/>
            <person name="Miyake S."/>
            <person name="Morris K."/>
            <person name="Mottagui-Tabar S."/>
            <person name="Mulder N."/>
            <person name="Nakano N."/>
            <person name="Nakauchi H."/>
            <person name="Ng P."/>
            <person name="Nilsson R."/>
            <person name="Nishiguchi S."/>
            <person name="Nishikawa S."/>
            <person name="Nori F."/>
            <person name="Ohara O."/>
            <person name="Okazaki Y."/>
            <person name="Orlando V."/>
            <person name="Pang K.C."/>
            <person name="Pavan W.J."/>
            <person name="Pavesi G."/>
            <person name="Pesole G."/>
            <person name="Petrovsky N."/>
            <person name="Piazza S."/>
            <person name="Reed J."/>
            <person name="Reid J.F."/>
            <person name="Ring B.Z."/>
            <person name="Ringwald M."/>
            <person name="Rost B."/>
            <person name="Ruan Y."/>
            <person name="Salzberg S.L."/>
            <person name="Sandelin A."/>
            <person name="Schneider C."/>
            <person name="Schoenbach C."/>
            <person name="Sekiguchi K."/>
            <person name="Semple C.A."/>
            <person name="Seno S."/>
            <person name="Sessa L."/>
            <person name="Sheng Y."/>
            <person name="Shibata Y."/>
            <person name="Shimada H."/>
            <person name="Shimada K."/>
            <person name="Silva D."/>
            <person name="Sinclair B."/>
            <person name="Sperling S."/>
            <person name="Stupka E."/>
            <person name="Sugiura K."/>
            <person name="Sultana R."/>
            <person name="Takenaka Y."/>
            <person name="Taki K."/>
            <person name="Tammoja K."/>
            <person name="Tan S.L."/>
            <person name="Tang S."/>
            <person name="Taylor M.S."/>
            <person name="Tegner J."/>
            <person name="Teichmann S.A."/>
            <person name="Ueda H.R."/>
            <person name="van Nimwegen E."/>
            <person name="Verardo R."/>
            <person name="Wei C.L."/>
            <person name="Yagi K."/>
            <person name="Yamanishi H."/>
            <person name="Zabarovsky E."/>
            <person name="Zhu S."/>
            <person name="Zimmer A."/>
            <person name="Hide W."/>
            <person name="Bult C."/>
            <person name="Grimmond S.M."/>
            <person name="Teasdale R.D."/>
            <person name="Liu E.T."/>
            <person name="Brusic V."/>
            <person name="Quackenbush J."/>
            <person name="Wahlestedt C."/>
            <person name="Mattick J.S."/>
            <person name="Hume D.A."/>
            <person name="Kai C."/>
            <person name="Sasaki D."/>
            <person name="Tomaru Y."/>
            <person name="Fukuda S."/>
            <person name="Kanamori-Katayama M."/>
            <person name="Suzuki M."/>
            <person name="Aoki J."/>
            <person name="Arakawa T."/>
            <person name="Iida J."/>
            <person name="Imamura K."/>
            <person name="Itoh M."/>
            <person name="Kato T."/>
            <person name="Kawaji H."/>
            <person name="Kawagashira N."/>
            <person name="Kawashima T."/>
            <person name="Kojima M."/>
            <person name="Kondo S."/>
            <person name="Konno H."/>
            <person name="Nakano K."/>
            <person name="Ninomiya N."/>
            <person name="Nishio T."/>
            <person name="Okada M."/>
            <person name="Plessy C."/>
            <person name="Shibata K."/>
            <person name="Shiraki T."/>
            <person name="Suzuki S."/>
            <person name="Tagami M."/>
            <person name="Waki K."/>
            <person name="Watahiki A."/>
            <person name="Okamura-Oho Y."/>
            <person name="Suzuki H."/>
            <person name="Kawai J."/>
            <person name="Hayashizaki Y."/>
        </authorList>
    </citation>
    <scope>NUCLEOTIDE SEQUENCE [LARGE SCALE MRNA]</scope>
    <source>
        <strain>C57BL/6J</strain>
        <tissue>Embryonic stem cell</tissue>
    </source>
</reference>
<reference key="3">
    <citation type="journal article" date="2004" name="Genome Res.">
        <title>The status, quality, and expansion of the NIH full-length cDNA project: the Mammalian Gene Collection (MGC).</title>
        <authorList>
            <consortium name="The MGC Project Team"/>
        </authorList>
    </citation>
    <scope>NUCLEOTIDE SEQUENCE [LARGE SCALE MRNA]</scope>
    <source>
        <strain>Czech II</strain>
        <tissue>Mammary gland</tissue>
    </source>
</reference>
<reference key="4">
    <citation type="journal article" date="2010" name="Cell">
        <title>A tissue-specific atlas of mouse protein phosphorylation and expression.</title>
        <authorList>
            <person name="Huttlin E.L."/>
            <person name="Jedrychowski M.P."/>
            <person name="Elias J.E."/>
            <person name="Goswami T."/>
            <person name="Rad R."/>
            <person name="Beausoleil S.A."/>
            <person name="Villen J."/>
            <person name="Haas W."/>
            <person name="Sowa M.E."/>
            <person name="Gygi S.P."/>
        </authorList>
    </citation>
    <scope>IDENTIFICATION BY MASS SPECTROMETRY [LARGE SCALE ANALYSIS]</scope>
    <source>
        <tissue>Testis</tissue>
    </source>
</reference>
<reference key="5">
    <citation type="journal article" date="2011" name="PLoS Genet.">
        <title>A novel protein LZTFL1 regulates ciliary trafficking of the BBSome and Smoothened.</title>
        <authorList>
            <person name="Seo S."/>
            <person name="Zhang Q."/>
            <person name="Bugge K."/>
            <person name="Breslow D.K."/>
            <person name="Searby C.C."/>
            <person name="Nachury M.V."/>
            <person name="Sheffield V.C."/>
        </authorList>
    </citation>
    <scope>IDENTIFICATION IN THE BBSOME COMPLEX</scope>
</reference>
<reference key="6">
    <citation type="journal article" date="2008" name="J. Clin. Invest.">
        <title>Leptin resistance contributes to obesity and hypertension in mouse models of Bardet-Biedl syndrome.</title>
        <authorList>
            <person name="Rahmouni K."/>
            <person name="Fath M.A."/>
            <person name="Seo S."/>
            <person name="Thedens D.R."/>
            <person name="Berry C.J."/>
            <person name="Weiss R."/>
            <person name="Nishimura D.Y."/>
            <person name="Sheffield V.C."/>
        </authorList>
    </citation>
    <scope>DISRUPTION PHENOTYPE</scope>
</reference>
<evidence type="ECO:0000250" key="1"/>
<evidence type="ECO:0000250" key="2">
    <source>
        <dbReference type="UniProtKB" id="Q9BXC9"/>
    </source>
</evidence>
<evidence type="ECO:0000255" key="3"/>
<evidence type="ECO:0000269" key="4">
    <source>
    </source>
</evidence>
<evidence type="ECO:0000269" key="5">
    <source>
    </source>
</evidence>
<evidence type="ECO:0000305" key="6"/>
<accession>Q9CWF6</accession>
<protein>
    <recommendedName>
        <fullName evidence="6">BBSome complex member BBS2</fullName>
    </recommendedName>
    <alternativeName>
        <fullName>Bardet-Biedl syndrome 2 protein homolog</fullName>
    </alternativeName>
</protein>
<name>BBS2_MOUSE</name>
<sequence length="721" mass="79932">MLLPVFTLKLRHKISPRMVAIGRYDGTHPCLAAATQAGKVFIHNPHTRSQHFSASRVFQSPLESDVSLLNINQTVSCLGSGVLNPELGYDTLLVGTQTSLLAYDIYNNSDLFYREVSDGANAIVLGTLGDIAPPLAIIGGNCALQGFDHEGNDLFWTVTGDNVHSLALCDFDGDGKTELLVGSEDFDIRVFKEDEIVAEMTETEIVTSLCPMYGSRFGYALSNGTVGVYDKTARYWRIKSKNHAMSIHAFDINSDGVCELITGWSNGKVDARSDRTGEVIFKDNFSSAVAGVVEGDYRMDGHVQLICCSVDGEIRGYLPGTAEMKGNLLDTSVEQDLIRELSQKKQNLLLELRNYEESTKAELSSPLNEADGQKGIIPANTRLHTALSVNMGNDLQDAHAELGISTSNDTIIRAVLIFAEGIFVGESHVVHPSIHNLSSSLRVPITPPKDVPVDLHLKTFVGYRSSTQFHVFELTRQLPRFTMYALTSPDAASEPVSYVNFSVAERTQRMVTWLNQNFLLPEDSNVQNSPFHVCFTSLRNGGQLYIKMKQSGEITVNTDDIDLAGDIIQSIASFFAIEDLQVEADFPVYFEELRKVLVKVDEYHSVHQKLSADMADNSNLIRSLLVRAEDARLMRDMKTMKSRYMELYDLNKDLLNGYKIRCNNHTELLGNLKAVNQAIQRAGRLRVGKPKNQVISACRDAIRSNNINTLFRIMRVGTAPS</sequence>